<comment type="function">
    <text evidence="1 2 5 6 9">Monooxygenase; part of the ergochrome gene cluster responsible for the typical purple-black color of the ergot sclerotia (Probable). The ergochrome gene cluster produces several ergot pigments including the yellow ergochrome secalonic acid and its derivatives, as well as the red anthraquinones endocrocin and clavorubin (PubMed:28955461). The pathway begins with the synthesis of atrochrysone thioester by the polyketide synthase (PKS) CPUR_05437 (By similarity). The atrochrysone carboxyl ACP thioesterase CPUR_05436 then breaks the thioester bond and releases the atrochrysone carboxylic acid from CPUR_05437 (By similarity). The atrochrysone carboxylic acid is then converted to atrochrysone which is further transformed into emodin anthrone (By similarity). The next step is performed by the anthrone oxygenase CPUR_05434 that catalyzes the oxidation of emodinanthrone to emodin (By similarity). Emodin is further modified to yield monodictyphenone via several steps involving CPUR_05427, CPUR_05428, CPUR_05429 and CPUR_05430 (By similarity). The short chain dehydrogenase/reductase CPUR_05418 then catalyzes the C-5 ketoreduction to give the xanthone skeleton of the monomeric units (PubMed:32105084). Ergochromes formation requires further dimerization steps of different xanthone units, probably catalyzed by the cytochrome P450 monooxygenase CPUR_05419 (PubMed:28955461). CPUR_05425, CPUR_05426 and CPUR_05431 are unique to Claviceps, thus it is likely that they are involved in further modification of xanthone units or in their dimerization (PubMed:28955461). The yellow ergochromes and the red anthraquinone pigments endocrocin and clavorubin are products from the same PKS derived precursors and the latter are likely shunt products in the pathway of xanthone biosynthesis (PubMed:28955461). It is proposed that atrochrysone carboxylic acid released from the PKS CPUR_05437 can also be converted to endocrocin anthrone which is further oxidized into endocrocin by CPUR_05435 (By similarity). Endocrocin could be then modified to clavorubin, possibly by CPUR_05423 and CPUR_05431 (PubMed:28955461). Clavorubin is the principal anthraquinone metabolite produced by the cluster with a much higher yield compared to endocrocin (PubMed:28955461).</text>
</comment>
<comment type="similarity">
    <text evidence="8">Belongs to the small heat shock protein (HSP20) family.</text>
</comment>
<feature type="chain" id="PRO_0000453512" description="SHSP domain-containing protein CPUR_05420">
    <location>
        <begin position="1"/>
        <end position="296"/>
    </location>
</feature>
<feature type="domain" description="sHSP" evidence="3">
    <location>
        <begin position="169"/>
        <end position="296"/>
    </location>
</feature>
<feature type="region of interest" description="Disordered" evidence="4">
    <location>
        <begin position="50"/>
        <end position="83"/>
    </location>
</feature>
<evidence type="ECO:0000250" key="1">
    <source>
        <dbReference type="UniProtKB" id="Q4W944"/>
    </source>
</evidence>
<evidence type="ECO:0000250" key="2">
    <source>
        <dbReference type="UniProtKB" id="Q5BH30"/>
    </source>
</evidence>
<evidence type="ECO:0000255" key="3">
    <source>
        <dbReference type="PROSITE-ProRule" id="PRU00285"/>
    </source>
</evidence>
<evidence type="ECO:0000256" key="4">
    <source>
        <dbReference type="SAM" id="MobiDB-lite"/>
    </source>
</evidence>
<evidence type="ECO:0000269" key="5">
    <source>
    </source>
</evidence>
<evidence type="ECO:0000269" key="6">
    <source>
    </source>
</evidence>
<evidence type="ECO:0000303" key="7">
    <source>
    </source>
</evidence>
<evidence type="ECO:0000305" key="8"/>
<evidence type="ECO:0000305" key="9">
    <source>
    </source>
</evidence>
<organism>
    <name type="scientific">Claviceps purpurea (strain 20.1)</name>
    <name type="common">Ergot fungus</name>
    <name type="synonym">Sphacelia segetum</name>
    <dbReference type="NCBI Taxonomy" id="1111077"/>
    <lineage>
        <taxon>Eukaryota</taxon>
        <taxon>Fungi</taxon>
        <taxon>Dikarya</taxon>
        <taxon>Ascomycota</taxon>
        <taxon>Pezizomycotina</taxon>
        <taxon>Sordariomycetes</taxon>
        <taxon>Hypocreomycetidae</taxon>
        <taxon>Hypocreales</taxon>
        <taxon>Clavicipitaceae</taxon>
        <taxon>Claviceps</taxon>
    </lineage>
</organism>
<sequence length="296" mass="31899">MATMAHANTSHPLYVAGMAGNTNHMSPWGEDAHKRWLAALGPSSLRGPFAWQTCPQQRHPHQPDVSGPPGSGFGEQPSQDTPNPMFGATGPHQQHNFPSHPYAAHNSKEAHEAWLKVYQSVWGNTKHAGAWSGPWSPAAGGRQHHMSGGGGGGGPRWMGGPMPWTQCDETKKSFTPDIDVVETPESYSVQASLPGAKKEDVKVSWDPSTYELRIEGVVSRSVGNDEEGEKKTEQSGRFSLRERQTGKFCRTVYLGSQVDGDKIEEGGLSAGMDDGVLRIAVPRQGSGKGVKEITIV</sequence>
<protein>
    <recommendedName>
        <fullName evidence="8">SHSP domain-containing protein CPUR_05420</fullName>
    </recommendedName>
    <alternativeName>
        <fullName evidence="7">Ergochrome biosynthesis cluster protein CPUR_05420</fullName>
    </alternativeName>
</protein>
<keyword id="KW-1185">Reference proteome</keyword>
<keyword id="KW-0346">Stress response</keyword>
<gene>
    <name type="ORF">CPUR_05420</name>
</gene>
<reference key="1">
    <citation type="journal article" date="2013" name="PLoS Genet.">
        <title>Plant-symbiotic fungi as chemical engineers: Multi-genome analysis of the Clavicipitaceae reveals dynamics of alkaloid loci.</title>
        <authorList>
            <person name="Schardl C.L."/>
            <person name="Young C.A."/>
            <person name="Hesse U."/>
            <person name="Amyotte S.G."/>
            <person name="Andreeva K."/>
            <person name="Calie P.J."/>
            <person name="Fleetwood D.J."/>
            <person name="Haws D.C."/>
            <person name="Moore N."/>
            <person name="Oeser B."/>
            <person name="Panaccione D.G."/>
            <person name="Schweri K.K."/>
            <person name="Voisey C.R."/>
            <person name="Farman M.L."/>
            <person name="Jaromczyk J.W."/>
            <person name="Roe B.A."/>
            <person name="O'Sullivan D.M."/>
            <person name="Scott B."/>
            <person name="Tudzynski P."/>
            <person name="An Z."/>
            <person name="Arnaoudova E.G."/>
            <person name="Bullock C.T."/>
            <person name="Charlton N.D."/>
            <person name="Chen L."/>
            <person name="Cox M."/>
            <person name="Dinkins R.D."/>
            <person name="Florea S."/>
            <person name="Glenn A.E."/>
            <person name="Gordon A."/>
            <person name="Gueldener U."/>
            <person name="Harris D.R."/>
            <person name="Hollin W."/>
            <person name="Jaromczyk J."/>
            <person name="Johnson R.D."/>
            <person name="Khan A.K."/>
            <person name="Leistner E."/>
            <person name="Leuchtmann A."/>
            <person name="Li C."/>
            <person name="Liu J."/>
            <person name="Liu J."/>
            <person name="Liu M."/>
            <person name="Mace W."/>
            <person name="Machado C."/>
            <person name="Nagabhyru P."/>
            <person name="Pan J."/>
            <person name="Schmid J."/>
            <person name="Sugawara K."/>
            <person name="Steiner U."/>
            <person name="Takach J.E."/>
            <person name="Tanaka E."/>
            <person name="Webb J.S."/>
            <person name="Wilson E.V."/>
            <person name="Wiseman J.L."/>
            <person name="Yoshida R."/>
            <person name="Zeng Z."/>
        </authorList>
    </citation>
    <scope>NUCLEOTIDE SEQUENCE [LARGE SCALE GENOMIC DNA]</scope>
    <source>
        <strain>20.1</strain>
    </source>
</reference>
<reference key="2">
    <citation type="journal article" date="2016" name="Fungal Biol. Biotechnol.">
        <title>Identification and characterization of the ergochrome gene cluster in the plant pathogenic fungus Claviceps purpurea.</title>
        <authorList>
            <person name="Neubauer L."/>
            <person name="Dopstadt J."/>
            <person name="Humpf H.U."/>
            <person name="Tudzynski P."/>
        </authorList>
    </citation>
    <scope>FUNCTION</scope>
</reference>
<reference key="3">
    <citation type="journal article" date="2019" name="Chem. Sci.">
        <title>Structure revision of cryptosporioptides and determination of the genetic basis for dimeric xanthone biosynthesis in fungi.</title>
        <authorList>
            <person name="Greco C."/>
            <person name="de Mattos-Shipley K."/>
            <person name="Bailey A.M."/>
            <person name="Mulholland N.P."/>
            <person name="Vincent J.L."/>
            <person name="Willis C.L."/>
            <person name="Cox R.J."/>
            <person name="Simpson T.J."/>
        </authorList>
    </citation>
    <scope>IDENTIFICATION</scope>
    <scope>FUNCTION</scope>
</reference>
<reference key="4">
    <citation type="journal article" date="2020" name="Org. Lett.">
        <title>Unraveling the fungal strategy for tetrahydroxanthone biosynthesis and diversification.</title>
        <authorList>
            <person name="Wei X."/>
            <person name="Matsuda Y."/>
        </authorList>
    </citation>
    <scope>FUNCTION</scope>
</reference>
<proteinExistence type="inferred from homology"/>
<accession>M1VWN2</accession>
<name>PIG19_CLAP2</name>
<dbReference type="EMBL" id="CAGA01000032">
    <property type="protein sequence ID" value="CCE31567.1"/>
    <property type="molecule type" value="Genomic_DNA"/>
</dbReference>
<dbReference type="SMR" id="M1VWN2"/>
<dbReference type="STRING" id="1111077.M1VWN2"/>
<dbReference type="VEuPathDB" id="FungiDB:CPUR_05420"/>
<dbReference type="eggNOG" id="KOG0710">
    <property type="taxonomic scope" value="Eukaryota"/>
</dbReference>
<dbReference type="HOGENOM" id="CLU_940093_0_0_1"/>
<dbReference type="OrthoDB" id="5511210at2759"/>
<dbReference type="Proteomes" id="UP000016801">
    <property type="component" value="Unassembled WGS sequence"/>
</dbReference>
<dbReference type="CDD" id="cd06464">
    <property type="entry name" value="ACD_sHsps-like"/>
    <property type="match status" value="1"/>
</dbReference>
<dbReference type="Gene3D" id="2.60.40.790">
    <property type="match status" value="1"/>
</dbReference>
<dbReference type="InterPro" id="IPR002068">
    <property type="entry name" value="A-crystallin/Hsp20_dom"/>
</dbReference>
<dbReference type="InterPro" id="IPR008978">
    <property type="entry name" value="HSP20-like_chaperone"/>
</dbReference>
<dbReference type="InterPro" id="IPR031107">
    <property type="entry name" value="Small_HSP"/>
</dbReference>
<dbReference type="PANTHER" id="PTHR11527">
    <property type="entry name" value="HEAT-SHOCK PROTEIN 20 FAMILY MEMBER"/>
    <property type="match status" value="1"/>
</dbReference>
<dbReference type="Pfam" id="PF00011">
    <property type="entry name" value="HSP20"/>
    <property type="match status" value="1"/>
</dbReference>
<dbReference type="SUPFAM" id="SSF49764">
    <property type="entry name" value="HSP20-like chaperones"/>
    <property type="match status" value="1"/>
</dbReference>
<dbReference type="PROSITE" id="PS01031">
    <property type="entry name" value="SHSP"/>
    <property type="match status" value="1"/>
</dbReference>